<sequence length="1081" mass="117896">MPKRTDIKTILIIGAGPIIIGQACEFDYSGAQACKALREEGFKVVLVNSNPATIMTDPSTADVTYIEPITWEVVERIIAKERPDAILPTMGGQTALNCALDLHRHGVLEKYNVELIGASPEAIDKAEDRQKFKEAMTKIGLGSAKSGIAHSLEEALAVQAQIARETSSGGYPIVIRPSFTLGGTGGGIAYNREEFEDICKRGLDLSPTNELLIEESLLGWKEYEMEVVRDKKDNCIIVCSIENLDPMGIHTGDSITVAPAQTLTDKEYQILRNASLAVLREIGVDTGGSNVQFSINPEDGRMIVIEMNPRVSRSSALASKATGFPIAKVAAKLAVGYTLDELKNEITGGATPASFEPSIDYVVTKVPRFAFEKFPQADSHLTTQMKSVGEVMAMGRTFQESFQKALRGLEVGVDGLDEKSSDRDEIIAEIGEPGPDRIWYLGDAFRLGLSIDEVYAETAVDPWFLAQIEDIVRTEALVKARTLDSLSAAELRLLKQKGFSDRRLATLMKTTAQAVREKRIAEKVRPVYKRVDTCAAEFATNTAYLYSTYEAEHGECEADPTERKKIMVLGGGPNRIGQGIEFDYCCVHAALALREDGYETIMVNCNPETVSTDYDTSDRLYFEPVTLEDVLEIVDKEKPVGVIVQYGGQTPLKLALDLEANGVPIIGTTPDMIDAAEDRERFQKLLHDLGLRQPPNRTARAEDEALKLADEIGYPLVVRPSYVLGGRAMEIVHEPRDLERYMREAVKVSNDSPVLLDRFLNDAIECDVDCLSDGKRVFIGGVMEHIEQAGVHSGDSACSLPPYSLSQATVDELKRQTAAMARALNVIGLMNVQFAIQQKGGEDIVYVLEVNPRASRTVPYVSKATGISLAKVAARCMAGQSLDEQGIHDEVVPSYYSVKEAVFPFNKFPGVDPVLGPEMRSTGEVMGVGRTFGEALFKSQLAAGSRLPEKGTVLMTVKDSDKPRAIEVARTLHTLGYPIVATRGTASAIEAAGIPVRVVNKVKDGRPHIVDMIKNGELALVFTTVDETRAAIADSRSIRTAALANRVTYYTTIAGARAAVEGLKHLQNLDVYDLQGLHASL</sequence>
<feature type="chain" id="PRO_0000145031" description="Carbamoyl phosphate synthase large chain">
    <location>
        <begin position="1"/>
        <end position="1081"/>
    </location>
</feature>
<feature type="domain" description="ATP-grasp 1" evidence="1">
    <location>
        <begin position="133"/>
        <end position="335"/>
    </location>
</feature>
<feature type="domain" description="ATP-grasp 2" evidence="1">
    <location>
        <begin position="683"/>
        <end position="878"/>
    </location>
</feature>
<feature type="domain" description="MGS-like" evidence="1">
    <location>
        <begin position="945"/>
        <end position="1081"/>
    </location>
</feature>
<feature type="region of interest" description="Carboxyphosphate synthetic domain" evidence="1">
    <location>
        <begin position="1"/>
        <end position="410"/>
    </location>
</feature>
<feature type="region of interest" description="Oligomerization domain" evidence="1">
    <location>
        <begin position="411"/>
        <end position="558"/>
    </location>
</feature>
<feature type="region of interest" description="Carbamoyl phosphate synthetic domain" evidence="1">
    <location>
        <begin position="559"/>
        <end position="944"/>
    </location>
</feature>
<feature type="region of interest" description="Allosteric domain" evidence="1">
    <location>
        <begin position="945"/>
        <end position="1081"/>
    </location>
</feature>
<feature type="binding site" evidence="1">
    <location>
        <position position="129"/>
    </location>
    <ligand>
        <name>ATP</name>
        <dbReference type="ChEBI" id="CHEBI:30616"/>
        <label>1</label>
    </ligand>
</feature>
<feature type="binding site" evidence="1">
    <location>
        <position position="176"/>
    </location>
    <ligand>
        <name>ATP</name>
        <dbReference type="ChEBI" id="CHEBI:30616"/>
        <label>1</label>
    </ligand>
</feature>
<feature type="binding site" evidence="1">
    <location>
        <position position="182"/>
    </location>
    <ligand>
        <name>ATP</name>
        <dbReference type="ChEBI" id="CHEBI:30616"/>
        <label>1</label>
    </ligand>
</feature>
<feature type="binding site" evidence="1">
    <location>
        <position position="183"/>
    </location>
    <ligand>
        <name>ATP</name>
        <dbReference type="ChEBI" id="CHEBI:30616"/>
        <label>1</label>
    </ligand>
</feature>
<feature type="binding site" evidence="1">
    <location>
        <position position="215"/>
    </location>
    <ligand>
        <name>ATP</name>
        <dbReference type="ChEBI" id="CHEBI:30616"/>
        <label>1</label>
    </ligand>
</feature>
<feature type="binding site" evidence="1">
    <location>
        <position position="217"/>
    </location>
    <ligand>
        <name>ATP</name>
        <dbReference type="ChEBI" id="CHEBI:30616"/>
        <label>1</label>
    </ligand>
</feature>
<feature type="binding site" evidence="1">
    <location>
        <position position="222"/>
    </location>
    <ligand>
        <name>ATP</name>
        <dbReference type="ChEBI" id="CHEBI:30616"/>
        <label>1</label>
    </ligand>
</feature>
<feature type="binding site" evidence="1">
    <location>
        <position position="248"/>
    </location>
    <ligand>
        <name>ATP</name>
        <dbReference type="ChEBI" id="CHEBI:30616"/>
        <label>1</label>
    </ligand>
</feature>
<feature type="binding site" evidence="1">
    <location>
        <position position="249"/>
    </location>
    <ligand>
        <name>ATP</name>
        <dbReference type="ChEBI" id="CHEBI:30616"/>
        <label>1</label>
    </ligand>
</feature>
<feature type="binding site" evidence="1">
    <location>
        <position position="250"/>
    </location>
    <ligand>
        <name>ATP</name>
        <dbReference type="ChEBI" id="CHEBI:30616"/>
        <label>1</label>
    </ligand>
</feature>
<feature type="binding site" evidence="1">
    <location>
        <position position="292"/>
    </location>
    <ligand>
        <name>ATP</name>
        <dbReference type="ChEBI" id="CHEBI:30616"/>
        <label>1</label>
    </ligand>
</feature>
<feature type="binding site" evidence="1">
    <location>
        <position position="292"/>
    </location>
    <ligand>
        <name>Mg(2+)</name>
        <dbReference type="ChEBI" id="CHEBI:18420"/>
        <label>1</label>
    </ligand>
</feature>
<feature type="binding site" evidence="1">
    <location>
        <position position="292"/>
    </location>
    <ligand>
        <name>Mn(2+)</name>
        <dbReference type="ChEBI" id="CHEBI:29035"/>
        <label>1</label>
    </ligand>
</feature>
<feature type="binding site" evidence="1">
    <location>
        <position position="306"/>
    </location>
    <ligand>
        <name>ATP</name>
        <dbReference type="ChEBI" id="CHEBI:30616"/>
        <label>1</label>
    </ligand>
</feature>
<feature type="binding site" evidence="1">
    <location>
        <position position="306"/>
    </location>
    <ligand>
        <name>Mg(2+)</name>
        <dbReference type="ChEBI" id="CHEBI:18420"/>
        <label>1</label>
    </ligand>
</feature>
<feature type="binding site" evidence="1">
    <location>
        <position position="306"/>
    </location>
    <ligand>
        <name>Mg(2+)</name>
        <dbReference type="ChEBI" id="CHEBI:18420"/>
        <label>2</label>
    </ligand>
</feature>
<feature type="binding site" evidence="1">
    <location>
        <position position="306"/>
    </location>
    <ligand>
        <name>Mn(2+)</name>
        <dbReference type="ChEBI" id="CHEBI:29035"/>
        <label>1</label>
    </ligand>
</feature>
<feature type="binding site" evidence="1">
    <location>
        <position position="306"/>
    </location>
    <ligand>
        <name>Mn(2+)</name>
        <dbReference type="ChEBI" id="CHEBI:29035"/>
        <label>2</label>
    </ligand>
</feature>
<feature type="binding site" evidence="1">
    <location>
        <position position="308"/>
    </location>
    <ligand>
        <name>Mg(2+)</name>
        <dbReference type="ChEBI" id="CHEBI:18420"/>
        <label>2</label>
    </ligand>
</feature>
<feature type="binding site" evidence="1">
    <location>
        <position position="308"/>
    </location>
    <ligand>
        <name>Mn(2+)</name>
        <dbReference type="ChEBI" id="CHEBI:29035"/>
        <label>2</label>
    </ligand>
</feature>
<feature type="binding site" evidence="1">
    <location>
        <position position="719"/>
    </location>
    <ligand>
        <name>ATP</name>
        <dbReference type="ChEBI" id="CHEBI:30616"/>
        <label>2</label>
    </ligand>
</feature>
<feature type="binding site" evidence="1">
    <location>
        <position position="758"/>
    </location>
    <ligand>
        <name>ATP</name>
        <dbReference type="ChEBI" id="CHEBI:30616"/>
        <label>2</label>
    </ligand>
</feature>
<feature type="binding site" evidence="1">
    <location>
        <position position="760"/>
    </location>
    <ligand>
        <name>ATP</name>
        <dbReference type="ChEBI" id="CHEBI:30616"/>
        <label>2</label>
    </ligand>
</feature>
<feature type="binding site" evidence="1">
    <location>
        <position position="765"/>
    </location>
    <ligand>
        <name>ATP</name>
        <dbReference type="ChEBI" id="CHEBI:30616"/>
        <label>2</label>
    </ligand>
</feature>
<feature type="binding site" evidence="1">
    <location>
        <position position="790"/>
    </location>
    <ligand>
        <name>ATP</name>
        <dbReference type="ChEBI" id="CHEBI:30616"/>
        <label>2</label>
    </ligand>
</feature>
<feature type="binding site" evidence="1">
    <location>
        <position position="791"/>
    </location>
    <ligand>
        <name>ATP</name>
        <dbReference type="ChEBI" id="CHEBI:30616"/>
        <label>2</label>
    </ligand>
</feature>
<feature type="binding site" evidence="1">
    <location>
        <position position="792"/>
    </location>
    <ligand>
        <name>ATP</name>
        <dbReference type="ChEBI" id="CHEBI:30616"/>
        <label>2</label>
    </ligand>
</feature>
<feature type="binding site" evidence="1">
    <location>
        <position position="793"/>
    </location>
    <ligand>
        <name>ATP</name>
        <dbReference type="ChEBI" id="CHEBI:30616"/>
        <label>2</label>
    </ligand>
</feature>
<feature type="binding site" evidence="1">
    <location>
        <position position="833"/>
    </location>
    <ligand>
        <name>ATP</name>
        <dbReference type="ChEBI" id="CHEBI:30616"/>
        <label>2</label>
    </ligand>
</feature>
<feature type="binding site" evidence="1">
    <location>
        <position position="833"/>
    </location>
    <ligand>
        <name>Mg(2+)</name>
        <dbReference type="ChEBI" id="CHEBI:18420"/>
        <label>3</label>
    </ligand>
</feature>
<feature type="binding site" evidence="1">
    <location>
        <position position="833"/>
    </location>
    <ligand>
        <name>Mn(2+)</name>
        <dbReference type="ChEBI" id="CHEBI:29035"/>
        <label>3</label>
    </ligand>
</feature>
<feature type="binding site" evidence="1">
    <location>
        <position position="849"/>
    </location>
    <ligand>
        <name>ATP</name>
        <dbReference type="ChEBI" id="CHEBI:30616"/>
        <label>2</label>
    </ligand>
</feature>
<feature type="binding site" evidence="1">
    <location>
        <position position="849"/>
    </location>
    <ligand>
        <name>Mg(2+)</name>
        <dbReference type="ChEBI" id="CHEBI:18420"/>
        <label>3</label>
    </ligand>
</feature>
<feature type="binding site" evidence="1">
    <location>
        <position position="849"/>
    </location>
    <ligand>
        <name>Mg(2+)</name>
        <dbReference type="ChEBI" id="CHEBI:18420"/>
        <label>4</label>
    </ligand>
</feature>
<feature type="binding site" evidence="1">
    <location>
        <position position="849"/>
    </location>
    <ligand>
        <name>Mn(2+)</name>
        <dbReference type="ChEBI" id="CHEBI:29035"/>
        <label>3</label>
    </ligand>
</feature>
<feature type="binding site" evidence="1">
    <location>
        <position position="849"/>
    </location>
    <ligand>
        <name>Mn(2+)</name>
        <dbReference type="ChEBI" id="CHEBI:29035"/>
        <label>4</label>
    </ligand>
</feature>
<feature type="binding site" evidence="1">
    <location>
        <position position="851"/>
    </location>
    <ligand>
        <name>Mg(2+)</name>
        <dbReference type="ChEBI" id="CHEBI:18420"/>
        <label>4</label>
    </ligand>
</feature>
<feature type="binding site" evidence="1">
    <location>
        <position position="851"/>
    </location>
    <ligand>
        <name>Mn(2+)</name>
        <dbReference type="ChEBI" id="CHEBI:29035"/>
        <label>4</label>
    </ligand>
</feature>
<organism>
    <name type="scientific">Ralstonia nicotianae (strain ATCC BAA-1114 / GMI1000)</name>
    <name type="common">Ralstonia solanacearum</name>
    <dbReference type="NCBI Taxonomy" id="267608"/>
    <lineage>
        <taxon>Bacteria</taxon>
        <taxon>Pseudomonadati</taxon>
        <taxon>Pseudomonadota</taxon>
        <taxon>Betaproteobacteria</taxon>
        <taxon>Burkholderiales</taxon>
        <taxon>Burkholderiaceae</taxon>
        <taxon>Ralstonia</taxon>
        <taxon>Ralstonia solanacearum species complex</taxon>
    </lineage>
</organism>
<gene>
    <name evidence="1" type="primary">carB</name>
    <name type="ordered locus">RSc1521</name>
    <name type="ORF">RS03783</name>
</gene>
<proteinExistence type="inferred from homology"/>
<accession>Q8XZ83</accession>
<dbReference type="EC" id="6.3.4.16" evidence="1"/>
<dbReference type="EC" id="6.3.5.5" evidence="1"/>
<dbReference type="EMBL" id="AL646052">
    <property type="protein sequence ID" value="CAD15223.1"/>
    <property type="molecule type" value="Genomic_DNA"/>
</dbReference>
<dbReference type="RefSeq" id="WP_011001468.1">
    <property type="nucleotide sequence ID" value="NC_003295.1"/>
</dbReference>
<dbReference type="SMR" id="Q8XZ83"/>
<dbReference type="STRING" id="267608.RSc1521"/>
<dbReference type="EnsemblBacteria" id="CAD15223">
    <property type="protein sequence ID" value="CAD15223"/>
    <property type="gene ID" value="RSc1521"/>
</dbReference>
<dbReference type="KEGG" id="rso:RSc1521"/>
<dbReference type="PATRIC" id="fig|267608.8.peg.1556"/>
<dbReference type="eggNOG" id="COG0458">
    <property type="taxonomic scope" value="Bacteria"/>
</dbReference>
<dbReference type="HOGENOM" id="CLU_000513_1_0_4"/>
<dbReference type="UniPathway" id="UPA00068">
    <property type="reaction ID" value="UER00171"/>
</dbReference>
<dbReference type="UniPathway" id="UPA00070">
    <property type="reaction ID" value="UER00115"/>
</dbReference>
<dbReference type="Proteomes" id="UP000001436">
    <property type="component" value="Chromosome"/>
</dbReference>
<dbReference type="GO" id="GO:0005737">
    <property type="term" value="C:cytoplasm"/>
    <property type="evidence" value="ECO:0007669"/>
    <property type="project" value="TreeGrafter"/>
</dbReference>
<dbReference type="GO" id="GO:0005524">
    <property type="term" value="F:ATP binding"/>
    <property type="evidence" value="ECO:0007669"/>
    <property type="project" value="UniProtKB-UniRule"/>
</dbReference>
<dbReference type="GO" id="GO:0004087">
    <property type="term" value="F:carbamoyl-phosphate synthase (ammonia) activity"/>
    <property type="evidence" value="ECO:0007669"/>
    <property type="project" value="RHEA"/>
</dbReference>
<dbReference type="GO" id="GO:0004088">
    <property type="term" value="F:carbamoyl-phosphate synthase (glutamine-hydrolyzing) activity"/>
    <property type="evidence" value="ECO:0007669"/>
    <property type="project" value="UniProtKB-UniRule"/>
</dbReference>
<dbReference type="GO" id="GO:0046872">
    <property type="term" value="F:metal ion binding"/>
    <property type="evidence" value="ECO:0007669"/>
    <property type="project" value="UniProtKB-KW"/>
</dbReference>
<dbReference type="GO" id="GO:0044205">
    <property type="term" value="P:'de novo' UMP biosynthetic process"/>
    <property type="evidence" value="ECO:0007669"/>
    <property type="project" value="UniProtKB-UniRule"/>
</dbReference>
<dbReference type="GO" id="GO:0006541">
    <property type="term" value="P:glutamine metabolic process"/>
    <property type="evidence" value="ECO:0007669"/>
    <property type="project" value="TreeGrafter"/>
</dbReference>
<dbReference type="GO" id="GO:0006526">
    <property type="term" value="P:L-arginine biosynthetic process"/>
    <property type="evidence" value="ECO:0007669"/>
    <property type="project" value="UniProtKB-UniRule"/>
</dbReference>
<dbReference type="CDD" id="cd01424">
    <property type="entry name" value="MGS_CPS_II"/>
    <property type="match status" value="1"/>
</dbReference>
<dbReference type="FunFam" id="1.10.1030.10:FF:000002">
    <property type="entry name" value="Carbamoyl-phosphate synthase large chain"/>
    <property type="match status" value="1"/>
</dbReference>
<dbReference type="FunFam" id="3.30.1490.20:FF:000001">
    <property type="entry name" value="Carbamoyl-phosphate synthase large chain"/>
    <property type="match status" value="1"/>
</dbReference>
<dbReference type="FunFam" id="3.30.470.20:FF:000007">
    <property type="entry name" value="Carbamoyl-phosphate synthase large chain"/>
    <property type="match status" value="1"/>
</dbReference>
<dbReference type="FunFam" id="3.30.470.20:FF:000013">
    <property type="entry name" value="Carbamoyl-phosphate synthase large chain"/>
    <property type="match status" value="1"/>
</dbReference>
<dbReference type="FunFam" id="3.40.50.20:FF:000001">
    <property type="entry name" value="Carbamoyl-phosphate synthase large chain"/>
    <property type="match status" value="1"/>
</dbReference>
<dbReference type="FunFam" id="3.40.50.20:FF:000003">
    <property type="entry name" value="Carbamoyl-phosphate synthase large chain"/>
    <property type="match status" value="1"/>
</dbReference>
<dbReference type="Gene3D" id="3.40.50.20">
    <property type="match status" value="2"/>
</dbReference>
<dbReference type="Gene3D" id="3.30.470.20">
    <property type="entry name" value="ATP-grasp fold, B domain"/>
    <property type="match status" value="2"/>
</dbReference>
<dbReference type="Gene3D" id="1.10.1030.10">
    <property type="entry name" value="Carbamoyl-phosphate synthetase, large subunit oligomerisation domain"/>
    <property type="match status" value="1"/>
</dbReference>
<dbReference type="Gene3D" id="3.40.50.1380">
    <property type="entry name" value="Methylglyoxal synthase-like domain"/>
    <property type="match status" value="1"/>
</dbReference>
<dbReference type="HAMAP" id="MF_01210_A">
    <property type="entry name" value="CPSase_L_chain_A"/>
    <property type="match status" value="1"/>
</dbReference>
<dbReference type="HAMAP" id="MF_01210_B">
    <property type="entry name" value="CPSase_L_chain_B"/>
    <property type="match status" value="1"/>
</dbReference>
<dbReference type="InterPro" id="IPR011761">
    <property type="entry name" value="ATP-grasp"/>
</dbReference>
<dbReference type="InterPro" id="IPR006275">
    <property type="entry name" value="CarbamoylP_synth_lsu"/>
</dbReference>
<dbReference type="InterPro" id="IPR005480">
    <property type="entry name" value="CarbamoylP_synth_lsu_oligo"/>
</dbReference>
<dbReference type="InterPro" id="IPR036897">
    <property type="entry name" value="CarbamoylP_synth_lsu_oligo_sf"/>
</dbReference>
<dbReference type="InterPro" id="IPR005479">
    <property type="entry name" value="CbamoylP_synth_lsu-like_ATP-bd"/>
</dbReference>
<dbReference type="InterPro" id="IPR005483">
    <property type="entry name" value="CbamoylP_synth_lsu_CPSase_dom"/>
</dbReference>
<dbReference type="InterPro" id="IPR011607">
    <property type="entry name" value="MGS-like_dom"/>
</dbReference>
<dbReference type="InterPro" id="IPR036914">
    <property type="entry name" value="MGS-like_dom_sf"/>
</dbReference>
<dbReference type="InterPro" id="IPR033937">
    <property type="entry name" value="MGS_CPS_CarB"/>
</dbReference>
<dbReference type="InterPro" id="IPR016185">
    <property type="entry name" value="PreATP-grasp_dom_sf"/>
</dbReference>
<dbReference type="NCBIfam" id="TIGR01369">
    <property type="entry name" value="CPSaseII_lrg"/>
    <property type="match status" value="1"/>
</dbReference>
<dbReference type="NCBIfam" id="NF003671">
    <property type="entry name" value="PRK05294.1"/>
    <property type="match status" value="1"/>
</dbReference>
<dbReference type="NCBIfam" id="NF009455">
    <property type="entry name" value="PRK12815.1"/>
    <property type="match status" value="1"/>
</dbReference>
<dbReference type="PANTHER" id="PTHR11405:SF53">
    <property type="entry name" value="CARBAMOYL-PHOSPHATE SYNTHASE [AMMONIA], MITOCHONDRIAL"/>
    <property type="match status" value="1"/>
</dbReference>
<dbReference type="PANTHER" id="PTHR11405">
    <property type="entry name" value="CARBAMOYLTRANSFERASE FAMILY MEMBER"/>
    <property type="match status" value="1"/>
</dbReference>
<dbReference type="Pfam" id="PF02786">
    <property type="entry name" value="CPSase_L_D2"/>
    <property type="match status" value="2"/>
</dbReference>
<dbReference type="Pfam" id="PF02787">
    <property type="entry name" value="CPSase_L_D3"/>
    <property type="match status" value="1"/>
</dbReference>
<dbReference type="Pfam" id="PF02142">
    <property type="entry name" value="MGS"/>
    <property type="match status" value="1"/>
</dbReference>
<dbReference type="PRINTS" id="PR00098">
    <property type="entry name" value="CPSASE"/>
</dbReference>
<dbReference type="SMART" id="SM01096">
    <property type="entry name" value="CPSase_L_D3"/>
    <property type="match status" value="1"/>
</dbReference>
<dbReference type="SMART" id="SM00851">
    <property type="entry name" value="MGS"/>
    <property type="match status" value="1"/>
</dbReference>
<dbReference type="SUPFAM" id="SSF48108">
    <property type="entry name" value="Carbamoyl phosphate synthetase, large subunit connection domain"/>
    <property type="match status" value="1"/>
</dbReference>
<dbReference type="SUPFAM" id="SSF56059">
    <property type="entry name" value="Glutathione synthetase ATP-binding domain-like"/>
    <property type="match status" value="2"/>
</dbReference>
<dbReference type="SUPFAM" id="SSF52335">
    <property type="entry name" value="Methylglyoxal synthase-like"/>
    <property type="match status" value="1"/>
</dbReference>
<dbReference type="SUPFAM" id="SSF52440">
    <property type="entry name" value="PreATP-grasp domain"/>
    <property type="match status" value="2"/>
</dbReference>
<dbReference type="PROSITE" id="PS50975">
    <property type="entry name" value="ATP_GRASP"/>
    <property type="match status" value="2"/>
</dbReference>
<dbReference type="PROSITE" id="PS00866">
    <property type="entry name" value="CPSASE_1"/>
    <property type="match status" value="2"/>
</dbReference>
<dbReference type="PROSITE" id="PS00867">
    <property type="entry name" value="CPSASE_2"/>
    <property type="match status" value="2"/>
</dbReference>
<dbReference type="PROSITE" id="PS51855">
    <property type="entry name" value="MGS"/>
    <property type="match status" value="1"/>
</dbReference>
<comment type="function">
    <text evidence="1">Large subunit of the glutamine-dependent carbamoyl phosphate synthetase (CPSase). CPSase catalyzes the formation of carbamoyl phosphate from the ammonia moiety of glutamine, carbonate, and phosphate donated by ATP, constituting the first step of 2 biosynthetic pathways, one leading to arginine and/or urea and the other to pyrimidine nucleotides. The large subunit (synthetase) binds the substrates ammonia (free or transferred from glutamine from the small subunit), hydrogencarbonate and ATP and carries out an ATP-coupled ligase reaction, activating hydrogencarbonate by forming carboxy phosphate which reacts with ammonia to form carbamoyl phosphate.</text>
</comment>
<comment type="catalytic activity">
    <reaction evidence="1">
        <text>hydrogencarbonate + L-glutamine + 2 ATP + H2O = carbamoyl phosphate + L-glutamate + 2 ADP + phosphate + 2 H(+)</text>
        <dbReference type="Rhea" id="RHEA:18633"/>
        <dbReference type="ChEBI" id="CHEBI:15377"/>
        <dbReference type="ChEBI" id="CHEBI:15378"/>
        <dbReference type="ChEBI" id="CHEBI:17544"/>
        <dbReference type="ChEBI" id="CHEBI:29985"/>
        <dbReference type="ChEBI" id="CHEBI:30616"/>
        <dbReference type="ChEBI" id="CHEBI:43474"/>
        <dbReference type="ChEBI" id="CHEBI:58228"/>
        <dbReference type="ChEBI" id="CHEBI:58359"/>
        <dbReference type="ChEBI" id="CHEBI:456216"/>
        <dbReference type="EC" id="6.3.5.5"/>
    </reaction>
</comment>
<comment type="catalytic activity">
    <molecule>Carbamoyl phosphate synthase large chain</molecule>
    <reaction evidence="1">
        <text>hydrogencarbonate + NH4(+) + 2 ATP = carbamoyl phosphate + 2 ADP + phosphate + 2 H(+)</text>
        <dbReference type="Rhea" id="RHEA:18029"/>
        <dbReference type="ChEBI" id="CHEBI:15378"/>
        <dbReference type="ChEBI" id="CHEBI:17544"/>
        <dbReference type="ChEBI" id="CHEBI:28938"/>
        <dbReference type="ChEBI" id="CHEBI:30616"/>
        <dbReference type="ChEBI" id="CHEBI:43474"/>
        <dbReference type="ChEBI" id="CHEBI:58228"/>
        <dbReference type="ChEBI" id="CHEBI:456216"/>
        <dbReference type="EC" id="6.3.4.16"/>
    </reaction>
</comment>
<comment type="cofactor">
    <cofactor evidence="1">
        <name>Mg(2+)</name>
        <dbReference type="ChEBI" id="CHEBI:18420"/>
    </cofactor>
    <cofactor evidence="1">
        <name>Mn(2+)</name>
        <dbReference type="ChEBI" id="CHEBI:29035"/>
    </cofactor>
    <text evidence="1">Binds 4 Mg(2+) or Mn(2+) ions per subunit.</text>
</comment>
<comment type="pathway">
    <text evidence="1">Amino-acid biosynthesis; L-arginine biosynthesis; carbamoyl phosphate from bicarbonate: step 1/1.</text>
</comment>
<comment type="pathway">
    <text evidence="1">Pyrimidine metabolism; UMP biosynthesis via de novo pathway; (S)-dihydroorotate from bicarbonate: step 1/3.</text>
</comment>
<comment type="subunit">
    <text evidence="1">Composed of two chains; the small (or glutamine) chain promotes the hydrolysis of glutamine to ammonia, which is used by the large (or ammonia) chain to synthesize carbamoyl phosphate. Tetramer of heterodimers (alpha,beta)4.</text>
</comment>
<comment type="domain">
    <text evidence="1">The large subunit is composed of 2 ATP-grasp domains that are involved in binding the 2 ATP molecules needed for carbamoyl phosphate synthesis. The N-terminal ATP-grasp domain (referred to as the carboxyphosphate synthetic component) catalyzes the ATP-dependent phosphorylation of hydrogencarbonate to carboxyphosphate and the subsequent nucleophilic attack by ammonia to form a carbamate intermediate. The C-terminal ATP-grasp domain (referred to as the carbamoyl phosphate synthetic component) then catalyzes the phosphorylation of carbamate with the second ATP to form the end product carbamoyl phosphate. The reactive and unstable enzyme intermediates are sequentially channeled from one active site to the next through the interior of the protein over a distance of at least 96 A.</text>
</comment>
<comment type="similarity">
    <text evidence="1">Belongs to the CarB family.</text>
</comment>
<protein>
    <recommendedName>
        <fullName evidence="1">Carbamoyl phosphate synthase large chain</fullName>
        <ecNumber evidence="1">6.3.4.16</ecNumber>
        <ecNumber evidence="1">6.3.5.5</ecNumber>
    </recommendedName>
    <alternativeName>
        <fullName evidence="1">Carbamoyl phosphate synthetase ammonia chain</fullName>
    </alternativeName>
</protein>
<reference key="1">
    <citation type="journal article" date="2002" name="Nature">
        <title>Genome sequence of the plant pathogen Ralstonia solanacearum.</title>
        <authorList>
            <person name="Salanoubat M."/>
            <person name="Genin S."/>
            <person name="Artiguenave F."/>
            <person name="Gouzy J."/>
            <person name="Mangenot S."/>
            <person name="Arlat M."/>
            <person name="Billault A."/>
            <person name="Brottier P."/>
            <person name="Camus J.-C."/>
            <person name="Cattolico L."/>
            <person name="Chandler M."/>
            <person name="Choisne N."/>
            <person name="Claudel-Renard C."/>
            <person name="Cunnac S."/>
            <person name="Demange N."/>
            <person name="Gaspin C."/>
            <person name="Lavie M."/>
            <person name="Moisan A."/>
            <person name="Robert C."/>
            <person name="Saurin W."/>
            <person name="Schiex T."/>
            <person name="Siguier P."/>
            <person name="Thebault P."/>
            <person name="Whalen M."/>
            <person name="Wincker P."/>
            <person name="Levy M."/>
            <person name="Weissenbach J."/>
            <person name="Boucher C.A."/>
        </authorList>
    </citation>
    <scope>NUCLEOTIDE SEQUENCE [LARGE SCALE GENOMIC DNA]</scope>
    <source>
        <strain>ATCC BAA-1114 / GMI1000</strain>
    </source>
</reference>
<keyword id="KW-0028">Amino-acid biosynthesis</keyword>
<keyword id="KW-0055">Arginine biosynthesis</keyword>
<keyword id="KW-0067">ATP-binding</keyword>
<keyword id="KW-0436">Ligase</keyword>
<keyword id="KW-0460">Magnesium</keyword>
<keyword id="KW-0464">Manganese</keyword>
<keyword id="KW-0479">Metal-binding</keyword>
<keyword id="KW-0547">Nucleotide-binding</keyword>
<keyword id="KW-0665">Pyrimidine biosynthesis</keyword>
<keyword id="KW-1185">Reference proteome</keyword>
<keyword id="KW-0677">Repeat</keyword>
<name>CARB_RALN1</name>
<evidence type="ECO:0000255" key="1">
    <source>
        <dbReference type="HAMAP-Rule" id="MF_01210"/>
    </source>
</evidence>